<organism>
    <name type="scientific">Actinobacillus pleuropneumoniae serotype 3 (strain JL03)</name>
    <dbReference type="NCBI Taxonomy" id="434271"/>
    <lineage>
        <taxon>Bacteria</taxon>
        <taxon>Pseudomonadati</taxon>
        <taxon>Pseudomonadota</taxon>
        <taxon>Gammaproteobacteria</taxon>
        <taxon>Pasteurellales</taxon>
        <taxon>Pasteurellaceae</taxon>
        <taxon>Actinobacillus</taxon>
    </lineage>
</organism>
<comment type="function">
    <text evidence="1">One of the primary rRNA binding proteins, it binds directly near the 3'-end of the 23S rRNA, where it nucleates assembly of the 50S subunit.</text>
</comment>
<comment type="subunit">
    <text evidence="1">Part of the 50S ribosomal subunit. Forms a cluster with proteins L14 and L19.</text>
</comment>
<comment type="PTM">
    <text evidence="1">Methylated by PrmB.</text>
</comment>
<comment type="similarity">
    <text evidence="1">Belongs to the universal ribosomal protein uL3 family.</text>
</comment>
<reference key="1">
    <citation type="journal article" date="2008" name="PLoS ONE">
        <title>Genome biology of Actinobacillus pleuropneumoniae JL03, an isolate of serotype 3 prevalent in China.</title>
        <authorList>
            <person name="Xu Z."/>
            <person name="Zhou Y."/>
            <person name="Li L."/>
            <person name="Zhou R."/>
            <person name="Xiao S."/>
            <person name="Wan Y."/>
            <person name="Zhang S."/>
            <person name="Wang K."/>
            <person name="Li W."/>
            <person name="Li L."/>
            <person name="Jin H."/>
            <person name="Kang M."/>
            <person name="Dalai B."/>
            <person name="Li T."/>
            <person name="Liu L."/>
            <person name="Cheng Y."/>
            <person name="Zhang L."/>
            <person name="Xu T."/>
            <person name="Zheng H."/>
            <person name="Pu S."/>
            <person name="Wang B."/>
            <person name="Gu W."/>
            <person name="Zhang X.L."/>
            <person name="Zhu G.-F."/>
            <person name="Wang S."/>
            <person name="Zhao G.-P."/>
            <person name="Chen H."/>
        </authorList>
    </citation>
    <scope>NUCLEOTIDE SEQUENCE [LARGE SCALE GENOMIC DNA]</scope>
    <source>
        <strain>JL03</strain>
    </source>
</reference>
<gene>
    <name evidence="1" type="primary">rplC</name>
    <name type="ordered locus">APJL_1795</name>
</gene>
<dbReference type="EMBL" id="CP000687">
    <property type="protein sequence ID" value="ABY70345.1"/>
    <property type="molecule type" value="Genomic_DNA"/>
</dbReference>
<dbReference type="RefSeq" id="WP_005599280.1">
    <property type="nucleotide sequence ID" value="NC_010278.1"/>
</dbReference>
<dbReference type="SMR" id="B0BST1"/>
<dbReference type="GeneID" id="48600052"/>
<dbReference type="KEGG" id="apj:APJL_1795"/>
<dbReference type="HOGENOM" id="CLU_044142_4_1_6"/>
<dbReference type="Proteomes" id="UP000008547">
    <property type="component" value="Chromosome"/>
</dbReference>
<dbReference type="GO" id="GO:0022625">
    <property type="term" value="C:cytosolic large ribosomal subunit"/>
    <property type="evidence" value="ECO:0007669"/>
    <property type="project" value="TreeGrafter"/>
</dbReference>
<dbReference type="GO" id="GO:0019843">
    <property type="term" value="F:rRNA binding"/>
    <property type="evidence" value="ECO:0007669"/>
    <property type="project" value="UniProtKB-UniRule"/>
</dbReference>
<dbReference type="GO" id="GO:0003735">
    <property type="term" value="F:structural constituent of ribosome"/>
    <property type="evidence" value="ECO:0007669"/>
    <property type="project" value="InterPro"/>
</dbReference>
<dbReference type="GO" id="GO:0006412">
    <property type="term" value="P:translation"/>
    <property type="evidence" value="ECO:0007669"/>
    <property type="project" value="UniProtKB-UniRule"/>
</dbReference>
<dbReference type="FunFam" id="2.40.30.10:FF:000004">
    <property type="entry name" value="50S ribosomal protein L3"/>
    <property type="match status" value="1"/>
</dbReference>
<dbReference type="FunFam" id="3.30.160.810:FF:000001">
    <property type="entry name" value="50S ribosomal protein L3"/>
    <property type="match status" value="1"/>
</dbReference>
<dbReference type="Gene3D" id="3.30.160.810">
    <property type="match status" value="1"/>
</dbReference>
<dbReference type="Gene3D" id="2.40.30.10">
    <property type="entry name" value="Translation factors"/>
    <property type="match status" value="1"/>
</dbReference>
<dbReference type="HAMAP" id="MF_01325_B">
    <property type="entry name" value="Ribosomal_uL3_B"/>
    <property type="match status" value="1"/>
</dbReference>
<dbReference type="InterPro" id="IPR000597">
    <property type="entry name" value="Ribosomal_uL3"/>
</dbReference>
<dbReference type="InterPro" id="IPR019927">
    <property type="entry name" value="Ribosomal_uL3_bac/org-type"/>
</dbReference>
<dbReference type="InterPro" id="IPR019926">
    <property type="entry name" value="Ribosomal_uL3_CS"/>
</dbReference>
<dbReference type="InterPro" id="IPR009000">
    <property type="entry name" value="Transl_B-barrel_sf"/>
</dbReference>
<dbReference type="NCBIfam" id="TIGR03625">
    <property type="entry name" value="L3_bact"/>
    <property type="match status" value="1"/>
</dbReference>
<dbReference type="PANTHER" id="PTHR11229">
    <property type="entry name" value="50S RIBOSOMAL PROTEIN L3"/>
    <property type="match status" value="1"/>
</dbReference>
<dbReference type="PANTHER" id="PTHR11229:SF16">
    <property type="entry name" value="LARGE RIBOSOMAL SUBUNIT PROTEIN UL3C"/>
    <property type="match status" value="1"/>
</dbReference>
<dbReference type="Pfam" id="PF00297">
    <property type="entry name" value="Ribosomal_L3"/>
    <property type="match status" value="1"/>
</dbReference>
<dbReference type="SUPFAM" id="SSF50447">
    <property type="entry name" value="Translation proteins"/>
    <property type="match status" value="1"/>
</dbReference>
<dbReference type="PROSITE" id="PS00474">
    <property type="entry name" value="RIBOSOMAL_L3"/>
    <property type="match status" value="1"/>
</dbReference>
<feature type="chain" id="PRO_1000141815" description="Large ribosomal subunit protein uL3">
    <location>
        <begin position="1"/>
        <end position="208"/>
    </location>
</feature>
<feature type="modified residue" description="N5-methylglutamine" evidence="1">
    <location>
        <position position="149"/>
    </location>
</feature>
<sequence length="208" mass="22383">MIGLVGRKVGMTRVFTEDGVSIPVTVIEIEANRVTQVKTLENDGYSAIQVTTGSKKANRVTKPEAGHFVKAGVEAGRGLWEFRTEGEEFTLGQEINVDIFTDVKKVDVTGTSKGKGFQGGVKRWNFRTQDATHGNSLSHRVLGSIGQNQTPGRVFKGKKMAGHLGAERVTVQSLEVVRVDAERKLLLVKGAVPGATNSDVIVKPAVKA</sequence>
<name>RL3_ACTPJ</name>
<accession>B0BST1</accession>
<proteinExistence type="inferred from homology"/>
<evidence type="ECO:0000255" key="1">
    <source>
        <dbReference type="HAMAP-Rule" id="MF_01325"/>
    </source>
</evidence>
<evidence type="ECO:0000305" key="2"/>
<keyword id="KW-0488">Methylation</keyword>
<keyword id="KW-0687">Ribonucleoprotein</keyword>
<keyword id="KW-0689">Ribosomal protein</keyword>
<keyword id="KW-0694">RNA-binding</keyword>
<keyword id="KW-0699">rRNA-binding</keyword>
<protein>
    <recommendedName>
        <fullName evidence="1">Large ribosomal subunit protein uL3</fullName>
    </recommendedName>
    <alternativeName>
        <fullName evidence="2">50S ribosomal protein L3</fullName>
    </alternativeName>
</protein>